<protein>
    <recommendedName>
        <fullName evidence="1">Phosphoenolpyruvate carboxykinase (ATP)</fullName>
        <shortName evidence="1">PCK</shortName>
        <shortName evidence="1">PEP carboxykinase</shortName>
        <shortName evidence="1">PEPCK</shortName>
        <ecNumber evidence="1">4.1.1.49</ecNumber>
    </recommendedName>
</protein>
<sequence>MQINGITPQALAAYGIHDVRDIVYNPSYELLFKEERSPTLQGYERGIETQLGAVAVDTGIFTGRSPKDKYIVRDDVTRDTVWWSDQGKGKNDNHPLSQETWTHLKELVTTQLSGKRLFIIDAFCGANPDSRLSVRFVTEVAWQAHFVKNMFIRPSDEELEGFEPDFIVMNGAKCTNPNWQEQGLNSENFVAFNLTERIQLIGGTWYGGEMKKGMFSIMNYLLPLKGIASMHCSANVGEKGDVAVFFGLSGTGKTTLSTDPKRQLIGDDEHGWDDDGVFNFEGGCYAKTIKLSKEAEPDIFGAIKRDALLENVTVLADGAVDFNDGSKTENTRVSYPIYHIHNIVKPVSKAGHATKVILLTADAFGVLPPVSRLTSDQTQYHFLSGFTAKLAGTERGVTEPTPTFSACFGAAFLMLHPTQYAEVLVKRMKASGAQAYLVNTGWNGSGKRISIKDTRGIIDAILNGSIDDAEMQTLPVFDLAIPTSLPGVNPDILDPRDTYASIEQWQEKADDLAQRFITNFDKYTDAPAGAALVKAGPKR</sequence>
<organism>
    <name type="scientific">Pectobacterium atrosepticum (strain SCRI 1043 / ATCC BAA-672)</name>
    <name type="common">Erwinia carotovora subsp. atroseptica</name>
    <dbReference type="NCBI Taxonomy" id="218491"/>
    <lineage>
        <taxon>Bacteria</taxon>
        <taxon>Pseudomonadati</taxon>
        <taxon>Pseudomonadota</taxon>
        <taxon>Gammaproteobacteria</taxon>
        <taxon>Enterobacterales</taxon>
        <taxon>Pectobacteriaceae</taxon>
        <taxon>Pectobacterium</taxon>
    </lineage>
</organism>
<reference key="1">
    <citation type="journal article" date="2004" name="Proc. Natl. Acad. Sci. U.S.A.">
        <title>Genome sequence of the enterobacterial phytopathogen Erwinia carotovora subsp. atroseptica and characterization of virulence factors.</title>
        <authorList>
            <person name="Bell K.S."/>
            <person name="Sebaihia M."/>
            <person name="Pritchard L."/>
            <person name="Holden M.T.G."/>
            <person name="Hyman L.J."/>
            <person name="Holeva M.C."/>
            <person name="Thomson N.R."/>
            <person name="Bentley S.D."/>
            <person name="Churcher L.J.C."/>
            <person name="Mungall K."/>
            <person name="Atkin R."/>
            <person name="Bason N."/>
            <person name="Brooks K."/>
            <person name="Chillingworth T."/>
            <person name="Clark K."/>
            <person name="Doggett J."/>
            <person name="Fraser A."/>
            <person name="Hance Z."/>
            <person name="Hauser H."/>
            <person name="Jagels K."/>
            <person name="Moule S."/>
            <person name="Norbertczak H."/>
            <person name="Ormond D."/>
            <person name="Price C."/>
            <person name="Quail M.A."/>
            <person name="Sanders M."/>
            <person name="Walker D."/>
            <person name="Whitehead S."/>
            <person name="Salmond G.P.C."/>
            <person name="Birch P.R.J."/>
            <person name="Parkhill J."/>
            <person name="Toth I.K."/>
        </authorList>
    </citation>
    <scope>NUCLEOTIDE SEQUENCE [LARGE SCALE GENOMIC DNA]</scope>
    <source>
        <strain>SCRI 1043 / ATCC BAA-672</strain>
    </source>
</reference>
<proteinExistence type="inferred from homology"/>
<keyword id="KW-0067">ATP-binding</keyword>
<keyword id="KW-0963">Cytoplasm</keyword>
<keyword id="KW-0210">Decarboxylase</keyword>
<keyword id="KW-0312">Gluconeogenesis</keyword>
<keyword id="KW-0456">Lyase</keyword>
<keyword id="KW-0464">Manganese</keyword>
<keyword id="KW-0479">Metal-binding</keyword>
<keyword id="KW-0547">Nucleotide-binding</keyword>
<keyword id="KW-1185">Reference proteome</keyword>
<gene>
    <name evidence="1" type="primary">pckA</name>
    <name type="ordered locus">ECA4106</name>
</gene>
<evidence type="ECO:0000255" key="1">
    <source>
        <dbReference type="HAMAP-Rule" id="MF_00453"/>
    </source>
</evidence>
<feature type="chain" id="PRO_0000203821" description="Phosphoenolpyruvate carboxykinase (ATP)">
    <location>
        <begin position="1"/>
        <end position="539"/>
    </location>
</feature>
<feature type="binding site" evidence="1">
    <location>
        <position position="64"/>
    </location>
    <ligand>
        <name>substrate</name>
    </ligand>
</feature>
<feature type="binding site" evidence="1">
    <location>
        <position position="206"/>
    </location>
    <ligand>
        <name>substrate</name>
    </ligand>
</feature>
<feature type="binding site" evidence="1">
    <location>
        <position position="212"/>
    </location>
    <ligand>
        <name>ATP</name>
        <dbReference type="ChEBI" id="CHEBI:30616"/>
    </ligand>
</feature>
<feature type="binding site" evidence="1">
    <location>
        <position position="212"/>
    </location>
    <ligand>
        <name>Mn(2+)</name>
        <dbReference type="ChEBI" id="CHEBI:29035"/>
    </ligand>
</feature>
<feature type="binding site" evidence="1">
    <location>
        <position position="212"/>
    </location>
    <ligand>
        <name>substrate</name>
    </ligand>
</feature>
<feature type="binding site" evidence="1">
    <location>
        <position position="231"/>
    </location>
    <ligand>
        <name>ATP</name>
        <dbReference type="ChEBI" id="CHEBI:30616"/>
    </ligand>
</feature>
<feature type="binding site" evidence="1">
    <location>
        <position position="231"/>
    </location>
    <ligand>
        <name>Mn(2+)</name>
        <dbReference type="ChEBI" id="CHEBI:29035"/>
    </ligand>
</feature>
<feature type="binding site" evidence="1">
    <location>
        <begin position="247"/>
        <end position="255"/>
    </location>
    <ligand>
        <name>ATP</name>
        <dbReference type="ChEBI" id="CHEBI:30616"/>
    </ligand>
</feature>
<feature type="binding site" evidence="1">
    <location>
        <position position="268"/>
    </location>
    <ligand>
        <name>Mn(2+)</name>
        <dbReference type="ChEBI" id="CHEBI:29035"/>
    </ligand>
</feature>
<feature type="binding site" evidence="1">
    <location>
        <position position="296"/>
    </location>
    <ligand>
        <name>ATP</name>
        <dbReference type="ChEBI" id="CHEBI:30616"/>
    </ligand>
</feature>
<feature type="binding site" evidence="1">
    <location>
        <position position="332"/>
    </location>
    <ligand>
        <name>ATP</name>
        <dbReference type="ChEBI" id="CHEBI:30616"/>
    </ligand>
</feature>
<feature type="binding site" evidence="1">
    <location>
        <position position="332"/>
    </location>
    <ligand>
        <name>substrate</name>
    </ligand>
</feature>
<feature type="binding site" evidence="1">
    <location>
        <begin position="448"/>
        <end position="449"/>
    </location>
    <ligand>
        <name>ATP</name>
        <dbReference type="ChEBI" id="CHEBI:30616"/>
    </ligand>
</feature>
<feature type="binding site" evidence="1">
    <location>
        <position position="454"/>
    </location>
    <ligand>
        <name>ATP</name>
        <dbReference type="ChEBI" id="CHEBI:30616"/>
    </ligand>
</feature>
<accession>Q6CZP5</accession>
<comment type="function">
    <text evidence="1">Involved in the gluconeogenesis. Catalyzes the conversion of oxaloacetate (OAA) to phosphoenolpyruvate (PEP) through direct phosphoryl transfer between the nucleoside triphosphate and OAA.</text>
</comment>
<comment type="catalytic activity">
    <reaction evidence="1">
        <text>oxaloacetate + ATP = phosphoenolpyruvate + ADP + CO2</text>
        <dbReference type="Rhea" id="RHEA:18617"/>
        <dbReference type="ChEBI" id="CHEBI:16452"/>
        <dbReference type="ChEBI" id="CHEBI:16526"/>
        <dbReference type="ChEBI" id="CHEBI:30616"/>
        <dbReference type="ChEBI" id="CHEBI:58702"/>
        <dbReference type="ChEBI" id="CHEBI:456216"/>
        <dbReference type="EC" id="4.1.1.49"/>
    </reaction>
</comment>
<comment type="cofactor">
    <cofactor evidence="1">
        <name>Mn(2+)</name>
        <dbReference type="ChEBI" id="CHEBI:29035"/>
    </cofactor>
    <text evidence="1">Binds 1 Mn(2+) ion per subunit.</text>
</comment>
<comment type="pathway">
    <text evidence="1">Carbohydrate biosynthesis; gluconeogenesis.</text>
</comment>
<comment type="subunit">
    <text evidence="1">Monomer.</text>
</comment>
<comment type="subcellular location">
    <subcellularLocation>
        <location evidence="1">Cytoplasm</location>
    </subcellularLocation>
</comment>
<comment type="similarity">
    <text evidence="1">Belongs to the phosphoenolpyruvate carboxykinase (ATP) family.</text>
</comment>
<dbReference type="EC" id="4.1.1.49" evidence="1"/>
<dbReference type="EMBL" id="BX950851">
    <property type="protein sequence ID" value="CAG77003.1"/>
    <property type="molecule type" value="Genomic_DNA"/>
</dbReference>
<dbReference type="RefSeq" id="WP_011095579.1">
    <property type="nucleotide sequence ID" value="NC_004547.2"/>
</dbReference>
<dbReference type="SMR" id="Q6CZP5"/>
<dbReference type="STRING" id="218491.ECA4106"/>
<dbReference type="KEGG" id="eca:ECA4106"/>
<dbReference type="PATRIC" id="fig|218491.5.peg.4175"/>
<dbReference type="eggNOG" id="COG1866">
    <property type="taxonomic scope" value="Bacteria"/>
</dbReference>
<dbReference type="HOGENOM" id="CLU_018247_0_1_6"/>
<dbReference type="OrthoDB" id="9806325at2"/>
<dbReference type="UniPathway" id="UPA00138"/>
<dbReference type="Proteomes" id="UP000007966">
    <property type="component" value="Chromosome"/>
</dbReference>
<dbReference type="GO" id="GO:0005829">
    <property type="term" value="C:cytosol"/>
    <property type="evidence" value="ECO:0007669"/>
    <property type="project" value="TreeGrafter"/>
</dbReference>
<dbReference type="GO" id="GO:0005524">
    <property type="term" value="F:ATP binding"/>
    <property type="evidence" value="ECO:0007669"/>
    <property type="project" value="UniProtKB-UniRule"/>
</dbReference>
<dbReference type="GO" id="GO:0046872">
    <property type="term" value="F:metal ion binding"/>
    <property type="evidence" value="ECO:0007669"/>
    <property type="project" value="UniProtKB-KW"/>
</dbReference>
<dbReference type="GO" id="GO:0004612">
    <property type="term" value="F:phosphoenolpyruvate carboxykinase (ATP) activity"/>
    <property type="evidence" value="ECO:0007669"/>
    <property type="project" value="UniProtKB-UniRule"/>
</dbReference>
<dbReference type="GO" id="GO:0006094">
    <property type="term" value="P:gluconeogenesis"/>
    <property type="evidence" value="ECO:0007669"/>
    <property type="project" value="UniProtKB-UniRule"/>
</dbReference>
<dbReference type="CDD" id="cd00484">
    <property type="entry name" value="PEPCK_ATP"/>
    <property type="match status" value="1"/>
</dbReference>
<dbReference type="FunFam" id="3.40.449.10:FF:000001">
    <property type="entry name" value="Phosphoenolpyruvate carboxykinase (ATP)"/>
    <property type="match status" value="1"/>
</dbReference>
<dbReference type="Gene3D" id="3.90.228.20">
    <property type="match status" value="1"/>
</dbReference>
<dbReference type="Gene3D" id="3.40.449.10">
    <property type="entry name" value="Phosphoenolpyruvate Carboxykinase, domain 1"/>
    <property type="match status" value="1"/>
</dbReference>
<dbReference type="Gene3D" id="2.170.8.10">
    <property type="entry name" value="Phosphoenolpyruvate Carboxykinase, domain 2"/>
    <property type="match status" value="1"/>
</dbReference>
<dbReference type="HAMAP" id="MF_00453">
    <property type="entry name" value="PEPCK_ATP"/>
    <property type="match status" value="1"/>
</dbReference>
<dbReference type="InterPro" id="IPR001272">
    <property type="entry name" value="PEP_carboxykinase_ATP"/>
</dbReference>
<dbReference type="InterPro" id="IPR013035">
    <property type="entry name" value="PEP_carboxykinase_C"/>
</dbReference>
<dbReference type="InterPro" id="IPR008210">
    <property type="entry name" value="PEP_carboxykinase_N"/>
</dbReference>
<dbReference type="InterPro" id="IPR015994">
    <property type="entry name" value="PEPCK_ATP_CS"/>
</dbReference>
<dbReference type="NCBIfam" id="TIGR00224">
    <property type="entry name" value="pckA"/>
    <property type="match status" value="1"/>
</dbReference>
<dbReference type="NCBIfam" id="NF006819">
    <property type="entry name" value="PRK09344.1-1"/>
    <property type="match status" value="1"/>
</dbReference>
<dbReference type="NCBIfam" id="NF006820">
    <property type="entry name" value="PRK09344.1-2"/>
    <property type="match status" value="1"/>
</dbReference>
<dbReference type="NCBIfam" id="NF006821">
    <property type="entry name" value="PRK09344.1-3"/>
    <property type="match status" value="1"/>
</dbReference>
<dbReference type="PANTHER" id="PTHR30031:SF0">
    <property type="entry name" value="PHOSPHOENOLPYRUVATE CARBOXYKINASE (ATP)"/>
    <property type="match status" value="1"/>
</dbReference>
<dbReference type="PANTHER" id="PTHR30031">
    <property type="entry name" value="PHOSPHOENOLPYRUVATE CARBOXYKINASE ATP"/>
    <property type="match status" value="1"/>
</dbReference>
<dbReference type="Pfam" id="PF01293">
    <property type="entry name" value="PEPCK_ATP"/>
    <property type="match status" value="1"/>
</dbReference>
<dbReference type="PIRSF" id="PIRSF006294">
    <property type="entry name" value="PEP_crbxkin"/>
    <property type="match status" value="1"/>
</dbReference>
<dbReference type="SUPFAM" id="SSF68923">
    <property type="entry name" value="PEP carboxykinase N-terminal domain"/>
    <property type="match status" value="1"/>
</dbReference>
<dbReference type="SUPFAM" id="SSF53795">
    <property type="entry name" value="PEP carboxykinase-like"/>
    <property type="match status" value="1"/>
</dbReference>
<dbReference type="PROSITE" id="PS00532">
    <property type="entry name" value="PEPCK_ATP"/>
    <property type="match status" value="1"/>
</dbReference>
<name>PCKA_PECAS</name>